<dbReference type="EMBL" id="BC103010">
    <property type="protein sequence ID" value="AAI03011.1"/>
    <property type="molecule type" value="mRNA"/>
</dbReference>
<dbReference type="EMBL" id="X53268">
    <property type="protein sequence ID" value="CAA37366.1"/>
    <property type="status" value="ALT_INIT"/>
    <property type="molecule type" value="mRNA"/>
</dbReference>
<dbReference type="PIR" id="A60232">
    <property type="entry name" value="A60232"/>
</dbReference>
<dbReference type="SMR" id="Q28074"/>
<dbReference type="FunCoup" id="Q28074">
    <property type="interactions" value="285"/>
</dbReference>
<dbReference type="STRING" id="9913.ENSBTAP00000044200"/>
<dbReference type="GlyCosmos" id="Q28074">
    <property type="glycosylation" value="2 sites, No reported glycans"/>
</dbReference>
<dbReference type="GlyGen" id="Q28074">
    <property type="glycosylation" value="2 sites"/>
</dbReference>
<dbReference type="PaxDb" id="9913-ENSBTAP00000044200"/>
<dbReference type="eggNOG" id="ENOG502S4XC">
    <property type="taxonomic scope" value="Eukaryota"/>
</dbReference>
<dbReference type="HOGENOM" id="CLU_115449_0_0_1"/>
<dbReference type="InParanoid" id="Q28074"/>
<dbReference type="OrthoDB" id="8941324at2759"/>
<dbReference type="Proteomes" id="UP000009136">
    <property type="component" value="Unplaced"/>
</dbReference>
<dbReference type="GO" id="GO:0042105">
    <property type="term" value="C:alpha-beta T cell receptor complex"/>
    <property type="evidence" value="ECO:0000318"/>
    <property type="project" value="GO_Central"/>
</dbReference>
<dbReference type="GO" id="GO:0009897">
    <property type="term" value="C:external side of plasma membrane"/>
    <property type="evidence" value="ECO:0000318"/>
    <property type="project" value="GO_Central"/>
</dbReference>
<dbReference type="GO" id="GO:0004888">
    <property type="term" value="F:transmembrane signaling receptor activity"/>
    <property type="evidence" value="ECO:0000318"/>
    <property type="project" value="GO_Central"/>
</dbReference>
<dbReference type="GO" id="GO:0002250">
    <property type="term" value="P:adaptive immune response"/>
    <property type="evidence" value="ECO:0007669"/>
    <property type="project" value="UniProtKB-KW"/>
</dbReference>
<dbReference type="GO" id="GO:0007166">
    <property type="term" value="P:cell surface receptor signaling pathway"/>
    <property type="evidence" value="ECO:0000318"/>
    <property type="project" value="GO_Central"/>
</dbReference>
<dbReference type="GO" id="GO:0045059">
    <property type="term" value="P:positive thymic T cell selection"/>
    <property type="evidence" value="ECO:0000318"/>
    <property type="project" value="GO_Central"/>
</dbReference>
<dbReference type="FunFam" id="2.60.40.10:FF:001337">
    <property type="entry name" value="T-cell surface glycoprotein CD3 gamma chain"/>
    <property type="match status" value="1"/>
</dbReference>
<dbReference type="Gene3D" id="2.60.40.10">
    <property type="entry name" value="Immunoglobulins"/>
    <property type="match status" value="1"/>
</dbReference>
<dbReference type="InterPro" id="IPR015484">
    <property type="entry name" value="CD3_esu/gsu/dsu"/>
</dbReference>
<dbReference type="InterPro" id="IPR036179">
    <property type="entry name" value="Ig-like_dom_sf"/>
</dbReference>
<dbReference type="InterPro" id="IPR013783">
    <property type="entry name" value="Ig-like_fold"/>
</dbReference>
<dbReference type="InterPro" id="IPR032052">
    <property type="entry name" value="Ig_4"/>
</dbReference>
<dbReference type="InterPro" id="IPR003598">
    <property type="entry name" value="Ig_sub2"/>
</dbReference>
<dbReference type="InterPro" id="IPR003110">
    <property type="entry name" value="Phos_immunorcpt_sig_ITAM"/>
</dbReference>
<dbReference type="PANTHER" id="PTHR10570:SF8">
    <property type="entry name" value="T-CELL SURFACE GLYCOPROTEIN CD3 GAMMA CHAIN"/>
    <property type="match status" value="1"/>
</dbReference>
<dbReference type="PANTHER" id="PTHR10570">
    <property type="entry name" value="T-CELL SURFACE GLYCOPROTEIN CD3 GAMMA CHAIN / DELTA CHAIN"/>
    <property type="match status" value="1"/>
</dbReference>
<dbReference type="Pfam" id="PF16680">
    <property type="entry name" value="Ig_4"/>
    <property type="match status" value="1"/>
</dbReference>
<dbReference type="Pfam" id="PF02189">
    <property type="entry name" value="ITAM"/>
    <property type="match status" value="1"/>
</dbReference>
<dbReference type="SMART" id="SM00408">
    <property type="entry name" value="IGc2"/>
    <property type="match status" value="1"/>
</dbReference>
<dbReference type="SMART" id="SM00077">
    <property type="entry name" value="ITAM"/>
    <property type="match status" value="1"/>
</dbReference>
<dbReference type="SUPFAM" id="SSF48726">
    <property type="entry name" value="Immunoglobulin"/>
    <property type="match status" value="1"/>
</dbReference>
<dbReference type="PROSITE" id="PS51055">
    <property type="entry name" value="ITAM_1"/>
    <property type="match status" value="1"/>
</dbReference>
<name>CD3G_BOVIN</name>
<evidence type="ECO:0000250" key="1"/>
<evidence type="ECO:0000250" key="2">
    <source>
        <dbReference type="UniProtKB" id="P04234"/>
    </source>
</evidence>
<evidence type="ECO:0000250" key="3">
    <source>
        <dbReference type="UniProtKB" id="P09693"/>
    </source>
</evidence>
<evidence type="ECO:0000255" key="4"/>
<evidence type="ECO:0000255" key="5">
    <source>
        <dbReference type="PROSITE-ProRule" id="PRU00379"/>
    </source>
</evidence>
<evidence type="ECO:0000305" key="6"/>
<reference key="1">
    <citation type="submission" date="2005-08" db="EMBL/GenBank/DDBJ databases">
        <authorList>
            <consortium name="NIH - Mammalian Gene Collection (MGC) project"/>
        </authorList>
    </citation>
    <scope>NUCLEOTIDE SEQUENCE [LARGE SCALE MRNA]</scope>
    <source>
        <strain>Crossbred X Angus</strain>
        <tissue>Ileum</tissue>
    </source>
</reference>
<reference key="2">
    <citation type="journal article" date="1990" name="Eur. J. Immunol.">
        <title>Identification of a bovine surface antigen uniquely expressed on CD4-CD8-T cell receptor gamma/delta+ T lymphocytes.</title>
        <authorList>
            <person name="Clevers H."/>
            <person name="Machugh N.D."/>
            <person name="Bensaid A."/>
            <person name="Dunlap S."/>
            <person name="Baldwin C.L."/>
            <person name="Kaushal A."/>
            <person name="Iams K."/>
            <person name="Howard C.J."/>
            <person name="Morrison W.I."/>
        </authorList>
    </citation>
    <scope>NUCLEOTIDE SEQUENCE [MRNA] OF 1-91</scope>
</reference>
<feature type="signal peptide" evidence="1">
    <location>
        <begin position="1"/>
        <end position="22"/>
    </location>
</feature>
<feature type="chain" id="PRO_0000014614" description="T-cell surface glycoprotein CD3 gamma chain">
    <location>
        <begin position="23"/>
        <end position="173"/>
    </location>
</feature>
<feature type="topological domain" description="Extracellular" evidence="4">
    <location>
        <begin position="23"/>
        <end position="111"/>
    </location>
</feature>
<feature type="transmembrane region" description="Helical" evidence="4">
    <location>
        <begin position="112"/>
        <end position="132"/>
    </location>
</feature>
<feature type="topological domain" description="Cytoplasmic" evidence="4">
    <location>
        <begin position="133"/>
        <end position="173"/>
    </location>
</feature>
<feature type="domain" description="Ig-like">
    <location>
        <begin position="24"/>
        <end position="94"/>
    </location>
</feature>
<feature type="domain" description="ITAM" evidence="5">
    <location>
        <begin position="145"/>
        <end position="173"/>
    </location>
</feature>
<feature type="short sequence motif" description="Di-leucine motif" evidence="3">
    <location>
        <begin position="149"/>
        <end position="150"/>
    </location>
</feature>
<feature type="modified residue" description="Phosphoserine" evidence="3">
    <location>
        <position position="141"/>
    </location>
</feature>
<feature type="modified residue" description="Phosphoserine; by PKC" evidence="3">
    <location>
        <position position="144"/>
    </location>
</feature>
<feature type="glycosylation site" description="N-linked (GlcNAc...) asparagine" evidence="4">
    <location>
        <position position="45"/>
    </location>
</feature>
<feature type="glycosylation site" description="N-linked (GlcNAc...) asparagine" evidence="4">
    <location>
        <position position="88"/>
    </location>
</feature>
<feature type="disulfide bond" evidence="3">
    <location>
        <begin position="42"/>
        <end position="83"/>
    </location>
</feature>
<keyword id="KW-1064">Adaptive immunity</keyword>
<keyword id="KW-1003">Cell membrane</keyword>
<keyword id="KW-1015">Disulfide bond</keyword>
<keyword id="KW-0325">Glycoprotein</keyword>
<keyword id="KW-0391">Immunity</keyword>
<keyword id="KW-0393">Immunoglobulin domain</keyword>
<keyword id="KW-0472">Membrane</keyword>
<keyword id="KW-0597">Phosphoprotein</keyword>
<keyword id="KW-0675">Receptor</keyword>
<keyword id="KW-1185">Reference proteome</keyword>
<keyword id="KW-0732">Signal</keyword>
<keyword id="KW-0812">Transmembrane</keyword>
<keyword id="KW-1133">Transmembrane helix</keyword>
<organism>
    <name type="scientific">Bos taurus</name>
    <name type="common">Bovine</name>
    <dbReference type="NCBI Taxonomy" id="9913"/>
    <lineage>
        <taxon>Eukaryota</taxon>
        <taxon>Metazoa</taxon>
        <taxon>Chordata</taxon>
        <taxon>Craniata</taxon>
        <taxon>Vertebrata</taxon>
        <taxon>Euteleostomi</taxon>
        <taxon>Mammalia</taxon>
        <taxon>Eutheria</taxon>
        <taxon>Laurasiatheria</taxon>
        <taxon>Artiodactyla</taxon>
        <taxon>Ruminantia</taxon>
        <taxon>Pecora</taxon>
        <taxon>Bovidae</taxon>
        <taxon>Bovinae</taxon>
        <taxon>Bos</taxon>
    </lineage>
</organism>
<protein>
    <recommendedName>
        <fullName>T-cell surface glycoprotein CD3 gamma chain</fullName>
    </recommendedName>
    <alternativeName>
        <fullName>T-cell receptor T3 gamma chain</fullName>
    </alternativeName>
    <cdAntigenName>CD3g</cdAntigenName>
</protein>
<gene>
    <name type="primary">CD3G</name>
</gene>
<accession>Q28074</accession>
<accession>Q3SZA7</accession>
<comment type="function">
    <text evidence="3">Part of the TCR-CD3 complex present on T-lymphocyte cell surface that plays an essential role in adaptive immune response. When antigen presenting cells (APCs) activate T-cell receptor (TCR), TCR-mediated signals are transmitted across the cell membrane by the CD3 chains CD3D, CD3E, CD3G and CD3Z. All CD3 chains contain immunoreceptor tyrosine-based activation motifs (ITAMs) in their cytoplasmic domain. Upon TCR engagement, these motifs become phosphorylated by Src family protein tyrosine kinases LCK and FYN, resulting in the activation of downstream signaling pathways. In addition to this role of signal transduction in T-cell activation, CD3G plays an essential role in the dynamic regulation of TCR expression at the cell surface. Indeed, constitutive TCR cycling is dependent on the di-leucine-based (diL) receptor-sorting motif present in CD3G.</text>
</comment>
<comment type="subunit">
    <text evidence="3">The TCR-CD3 complex is composed of a CD3D/CD3E and a CD3G/CD3E heterodimers that preferentially associate with TCRalpha and TCRbeta, respectively, to form TCRalpha/CD3E/CD3G and TCRbeta/CD3G/CD3E trimers. In turn, the hexamer interacts with CD3Z homodimer to form the TCR-CD3 complex. Alternatively, TCRalpha and TCRbeta can be replaced by TCRgamma and TCRdelta.</text>
</comment>
<comment type="subcellular location">
    <subcellularLocation>
        <location evidence="3">Cell membrane</location>
        <topology evidence="3">Single-pass type I membrane protein</topology>
    </subcellularLocation>
</comment>
<comment type="domain">
    <text evidence="3">A di-leucine motif and a tyrosine-based motif are individually sufficient to induce both endocytosis and delivery to lysosomes.</text>
</comment>
<comment type="PTM">
    <text evidence="3">Phosphorylated on Tyr residues after T-cell receptor triggering by LCK in association with CD4/CD8. Phosphorylated also by PKC; leading to the TCR complex down-regulation.</text>
</comment>
<comment type="PTM">
    <text evidence="2">Phosphorylated on Tyr residues after T-cell receptor triggering by LCK in association with CD4/CD8.</text>
</comment>
<comment type="sequence caution" evidence="6">
    <conflict type="erroneous initiation">
        <sequence resource="EMBL-CDS" id="CAA37366"/>
    </conflict>
</comment>
<proteinExistence type="evidence at transcript level"/>
<sequence length="173" mass="19463">MEQGKHLAGLILAVFLLQGTMAHVKEVKVDDNREDGSVILICVTNDTTITWLKDVEQIGSGDTKKNTWNLGSSTKDPRGIYKCEGSNNQSKSLQIYYRMCQNCIELNPSTVAGFIFTEIVSIFLLAVGVYFIAGQEGVRQSRASDKQTLLNNDQLYQPLKEREDDQYSHLRKN</sequence>